<name>PSUG_STRGG</name>
<comment type="function">
    <text evidence="1">Catalyzes the reversible cleavage of pseudouridine 5'-phosphate (PsiMP) to ribose 5-phosphate and uracil. Functions biologically in the cleavage direction, as part of a pseudouridine degradation pathway.</text>
</comment>
<comment type="catalytic activity">
    <reaction evidence="1">
        <text>D-ribose 5-phosphate + uracil = psi-UMP + H2O</text>
        <dbReference type="Rhea" id="RHEA:18337"/>
        <dbReference type="ChEBI" id="CHEBI:15377"/>
        <dbReference type="ChEBI" id="CHEBI:17568"/>
        <dbReference type="ChEBI" id="CHEBI:58380"/>
        <dbReference type="ChEBI" id="CHEBI:78346"/>
        <dbReference type="EC" id="4.2.1.70"/>
    </reaction>
</comment>
<comment type="cofactor">
    <cofactor evidence="1">
        <name>Mn(2+)</name>
        <dbReference type="ChEBI" id="CHEBI:29035"/>
    </cofactor>
    <text evidence="1">Binds 1 Mn(2+) ion per subunit.</text>
</comment>
<comment type="subunit">
    <text evidence="1">Homotrimer.</text>
</comment>
<comment type="similarity">
    <text evidence="1">Belongs to the pseudouridine-5'-phosphate glycosidase family.</text>
</comment>
<organism>
    <name type="scientific">Streptomyces griseus subsp. griseus (strain JCM 4626 / CBS 651.72 / NBRC 13350 / KCC S-0626 / ISP 5235)</name>
    <dbReference type="NCBI Taxonomy" id="455632"/>
    <lineage>
        <taxon>Bacteria</taxon>
        <taxon>Bacillati</taxon>
        <taxon>Actinomycetota</taxon>
        <taxon>Actinomycetes</taxon>
        <taxon>Kitasatosporales</taxon>
        <taxon>Streptomycetaceae</taxon>
        <taxon>Streptomyces</taxon>
    </lineage>
</organism>
<dbReference type="EC" id="4.2.1.70" evidence="1"/>
<dbReference type="EMBL" id="AP009493">
    <property type="protein sequence ID" value="BAG22381.1"/>
    <property type="molecule type" value="Genomic_DNA"/>
</dbReference>
<dbReference type="RefSeq" id="WP_012381388.1">
    <property type="nucleotide sequence ID" value="NC_010572.1"/>
</dbReference>
<dbReference type="SMR" id="B1W0X1"/>
<dbReference type="KEGG" id="sgr:SGR_5552"/>
<dbReference type="PATRIC" id="fig|455632.4.peg.5687"/>
<dbReference type="eggNOG" id="COG2313">
    <property type="taxonomic scope" value="Bacteria"/>
</dbReference>
<dbReference type="HOGENOM" id="CLU_012201_0_1_11"/>
<dbReference type="Proteomes" id="UP000001685">
    <property type="component" value="Chromosome"/>
</dbReference>
<dbReference type="GO" id="GO:0005737">
    <property type="term" value="C:cytoplasm"/>
    <property type="evidence" value="ECO:0007669"/>
    <property type="project" value="TreeGrafter"/>
</dbReference>
<dbReference type="GO" id="GO:0016798">
    <property type="term" value="F:hydrolase activity, acting on glycosyl bonds"/>
    <property type="evidence" value="ECO:0007669"/>
    <property type="project" value="UniProtKB-KW"/>
</dbReference>
<dbReference type="GO" id="GO:0046872">
    <property type="term" value="F:metal ion binding"/>
    <property type="evidence" value="ECO:0007669"/>
    <property type="project" value="UniProtKB-KW"/>
</dbReference>
<dbReference type="GO" id="GO:0004730">
    <property type="term" value="F:pseudouridylate synthase activity"/>
    <property type="evidence" value="ECO:0007669"/>
    <property type="project" value="UniProtKB-UniRule"/>
</dbReference>
<dbReference type="GO" id="GO:0046113">
    <property type="term" value="P:nucleobase catabolic process"/>
    <property type="evidence" value="ECO:0007669"/>
    <property type="project" value="UniProtKB-UniRule"/>
</dbReference>
<dbReference type="Gene3D" id="3.40.1790.10">
    <property type="entry name" value="Indigoidine synthase domain"/>
    <property type="match status" value="1"/>
</dbReference>
<dbReference type="HAMAP" id="MF_01876">
    <property type="entry name" value="PsiMP_glycosidase"/>
    <property type="match status" value="1"/>
</dbReference>
<dbReference type="InterPro" id="IPR022830">
    <property type="entry name" value="Indigdn_synthA-like"/>
</dbReference>
<dbReference type="InterPro" id="IPR007342">
    <property type="entry name" value="PsuG"/>
</dbReference>
<dbReference type="PANTHER" id="PTHR42909:SF1">
    <property type="entry name" value="CARBOHYDRATE KINASE PFKB DOMAIN-CONTAINING PROTEIN"/>
    <property type="match status" value="1"/>
</dbReference>
<dbReference type="PANTHER" id="PTHR42909">
    <property type="entry name" value="ZGC:136858"/>
    <property type="match status" value="1"/>
</dbReference>
<dbReference type="Pfam" id="PF04227">
    <property type="entry name" value="Indigoidine_A"/>
    <property type="match status" value="1"/>
</dbReference>
<dbReference type="SUPFAM" id="SSF110581">
    <property type="entry name" value="Indigoidine synthase A-like"/>
    <property type="match status" value="1"/>
</dbReference>
<gene>
    <name evidence="1" type="primary">psuG</name>
    <name type="ordered locus">SGR_5552</name>
</gene>
<reference key="1">
    <citation type="journal article" date="2008" name="J. Bacteriol.">
        <title>Genome sequence of the streptomycin-producing microorganism Streptomyces griseus IFO 13350.</title>
        <authorList>
            <person name="Ohnishi Y."/>
            <person name="Ishikawa J."/>
            <person name="Hara H."/>
            <person name="Suzuki H."/>
            <person name="Ikenoya M."/>
            <person name="Ikeda H."/>
            <person name="Yamashita A."/>
            <person name="Hattori M."/>
            <person name="Horinouchi S."/>
        </authorList>
    </citation>
    <scope>NUCLEOTIDE SEQUENCE [LARGE SCALE GENOMIC DNA]</scope>
    <source>
        <strain>JCM 4626 / CBS 651.72 / NBRC 13350 / KCC S-0626 / ISP 5235</strain>
    </source>
</reference>
<feature type="chain" id="PRO_0000390551" description="Pseudouridine-5'-phosphate glycosidase">
    <location>
        <begin position="1"/>
        <end position="323"/>
    </location>
</feature>
<feature type="active site" description="Proton donor" evidence="1">
    <location>
        <position position="43"/>
    </location>
</feature>
<feature type="active site" description="Nucleophile" evidence="1">
    <location>
        <position position="177"/>
    </location>
</feature>
<feature type="binding site" evidence="1">
    <location>
        <position position="104"/>
    </location>
    <ligand>
        <name>substrate</name>
    </ligand>
</feature>
<feature type="binding site" evidence="1">
    <location>
        <position position="124"/>
    </location>
    <ligand>
        <name>substrate</name>
    </ligand>
</feature>
<feature type="binding site" evidence="1">
    <location>
        <position position="156"/>
    </location>
    <ligand>
        <name>Mn(2+)</name>
        <dbReference type="ChEBI" id="CHEBI:29035"/>
    </ligand>
</feature>
<feature type="binding site" evidence="1">
    <location>
        <begin position="158"/>
        <end position="160"/>
    </location>
    <ligand>
        <name>substrate</name>
    </ligand>
</feature>
<sequence length="323" mass="33416">MPQNPSDRRPAPRDNPGTNAYEPLLSAEVRAALSTGLPVVALESTIIAHGLPRPRNLSVARELEGLVRSAGAVPATVAVLDGRARIGLDGDQLERVAGDPAVRKLGHRDLAPALAAGADGATTVSATAFLAARAGIGVFATGGLGGVHREWAENQDESADLRLLARTGITVVCAGVKSILDVPATLQRLETLGVPVVGYGTGHFPGFYLSSSGEPVDWTVHSPEEVAEVIRAREALGGPVGALIVANPVAERDQLDPVLHDRVLAQALDACRERGISGQGVTPFLLDQLTRRTEGASLEANLAAVRGNVTLAARIAVAAADAR</sequence>
<accession>B1W0X1</accession>
<evidence type="ECO:0000255" key="1">
    <source>
        <dbReference type="HAMAP-Rule" id="MF_01876"/>
    </source>
</evidence>
<keyword id="KW-0326">Glycosidase</keyword>
<keyword id="KW-0378">Hydrolase</keyword>
<keyword id="KW-0456">Lyase</keyword>
<keyword id="KW-0464">Manganese</keyword>
<keyword id="KW-0479">Metal-binding</keyword>
<protein>
    <recommendedName>
        <fullName evidence="1">Pseudouridine-5'-phosphate glycosidase</fullName>
        <shortName evidence="1">PsiMP glycosidase</shortName>
        <ecNumber evidence="1">4.2.1.70</ecNumber>
    </recommendedName>
</protein>
<proteinExistence type="inferred from homology"/>